<name>RK20_EUGGR</name>
<comment type="function">
    <text evidence="1">Binds directly to 23S ribosomal RNA and is necessary for the in vitro assembly process of the 50S ribosomal subunit. It is not involved in the protein synthesizing functions of that subunit (By similarity).</text>
</comment>
<comment type="subcellular location">
    <subcellularLocation>
        <location>Plastid</location>
        <location>Chloroplast</location>
    </subcellularLocation>
</comment>
<comment type="similarity">
    <text evidence="2">Belongs to the bacterial ribosomal protein bL20 family.</text>
</comment>
<sequence length="124" mass="14671">MTRIKNNGISKKKRKRKISKMKGWVGGHSKLFRTGNQQLMKARHYAFYDRKKKKNLNKTLWITRINGGLKYYLTINEKYNIFVSFLRKTKTYVNKKLLSEINVRDSKSFSHLSKPIMKSTGINL</sequence>
<dbReference type="EMBL" id="Z11874">
    <property type="protein sequence ID" value="CAA77907.1"/>
    <property type="molecule type" value="Genomic_DNA"/>
</dbReference>
<dbReference type="EMBL" id="Y00143">
    <property type="protein sequence ID" value="CAA68338.1"/>
    <property type="molecule type" value="Genomic_DNA"/>
</dbReference>
<dbReference type="EMBL" id="X70810">
    <property type="protein sequence ID" value="CAA50090.1"/>
    <property type="molecule type" value="Genomic_DNA"/>
</dbReference>
<dbReference type="PIR" id="S07387">
    <property type="entry name" value="R5EG20"/>
</dbReference>
<dbReference type="RefSeq" id="NP_041903.1">
    <property type="nucleotide sequence ID" value="NC_001603.2"/>
</dbReference>
<dbReference type="SMR" id="P07133"/>
<dbReference type="GeneID" id="807526"/>
<dbReference type="GO" id="GO:0009507">
    <property type="term" value="C:chloroplast"/>
    <property type="evidence" value="ECO:0007669"/>
    <property type="project" value="UniProtKB-SubCell"/>
</dbReference>
<dbReference type="GO" id="GO:1990904">
    <property type="term" value="C:ribonucleoprotein complex"/>
    <property type="evidence" value="ECO:0007669"/>
    <property type="project" value="UniProtKB-KW"/>
</dbReference>
<dbReference type="GO" id="GO:0005840">
    <property type="term" value="C:ribosome"/>
    <property type="evidence" value="ECO:0007669"/>
    <property type="project" value="UniProtKB-KW"/>
</dbReference>
<dbReference type="GO" id="GO:0019843">
    <property type="term" value="F:rRNA binding"/>
    <property type="evidence" value="ECO:0007669"/>
    <property type="project" value="UniProtKB-UniRule"/>
</dbReference>
<dbReference type="GO" id="GO:0003735">
    <property type="term" value="F:structural constituent of ribosome"/>
    <property type="evidence" value="ECO:0007669"/>
    <property type="project" value="InterPro"/>
</dbReference>
<dbReference type="GO" id="GO:0000027">
    <property type="term" value="P:ribosomal large subunit assembly"/>
    <property type="evidence" value="ECO:0007669"/>
    <property type="project" value="UniProtKB-UniRule"/>
</dbReference>
<dbReference type="GO" id="GO:0006412">
    <property type="term" value="P:translation"/>
    <property type="evidence" value="ECO:0007669"/>
    <property type="project" value="InterPro"/>
</dbReference>
<dbReference type="CDD" id="cd07026">
    <property type="entry name" value="Ribosomal_L20"/>
    <property type="match status" value="1"/>
</dbReference>
<dbReference type="Gene3D" id="6.10.160.10">
    <property type="match status" value="1"/>
</dbReference>
<dbReference type="Gene3D" id="1.10.1900.20">
    <property type="entry name" value="Ribosomal protein L20"/>
    <property type="match status" value="1"/>
</dbReference>
<dbReference type="HAMAP" id="MF_00382">
    <property type="entry name" value="Ribosomal_bL20"/>
    <property type="match status" value="1"/>
</dbReference>
<dbReference type="InterPro" id="IPR005813">
    <property type="entry name" value="Ribosomal_bL20"/>
</dbReference>
<dbReference type="InterPro" id="IPR049946">
    <property type="entry name" value="RIBOSOMAL_L20_CS"/>
</dbReference>
<dbReference type="InterPro" id="IPR035566">
    <property type="entry name" value="Ribosomal_protein_bL20_C"/>
</dbReference>
<dbReference type="NCBIfam" id="TIGR01032">
    <property type="entry name" value="rplT_bact"/>
    <property type="match status" value="1"/>
</dbReference>
<dbReference type="PANTHER" id="PTHR10986">
    <property type="entry name" value="39S RIBOSOMAL PROTEIN L20"/>
    <property type="match status" value="1"/>
</dbReference>
<dbReference type="Pfam" id="PF00453">
    <property type="entry name" value="Ribosomal_L20"/>
    <property type="match status" value="1"/>
</dbReference>
<dbReference type="PRINTS" id="PR00062">
    <property type="entry name" value="RIBOSOMALL20"/>
</dbReference>
<dbReference type="SUPFAM" id="SSF74731">
    <property type="entry name" value="Ribosomal protein L20"/>
    <property type="match status" value="1"/>
</dbReference>
<dbReference type="PROSITE" id="PS00937">
    <property type="entry name" value="RIBOSOMAL_L20"/>
    <property type="match status" value="1"/>
</dbReference>
<feature type="initiator methionine" description="Removed" evidence="1">
    <location>
        <position position="1"/>
    </location>
</feature>
<feature type="chain" id="PRO_0000177287" description="Large ribosomal subunit protein bL20c">
    <location>
        <begin position="2"/>
        <end position="124"/>
    </location>
</feature>
<protein>
    <recommendedName>
        <fullName evidence="2">Large ribosomal subunit protein bL20c</fullName>
    </recommendedName>
    <alternativeName>
        <fullName>50S ribosomal protein L20, chloroplastic</fullName>
    </alternativeName>
</protein>
<gene>
    <name type="primary">rpl20</name>
</gene>
<accession>P07133</accession>
<reference key="1">
    <citation type="journal article" date="1987" name="Nucleic Acids Res.">
        <title>Nucleotide sequence of the Euglena gracilis chloroplast gene for ribosomal protein L20.</title>
        <authorList>
            <person name="Manzara T."/>
            <person name="Hallick R.B."/>
        </authorList>
    </citation>
    <scope>NUCLEOTIDE SEQUENCE [GENOMIC DNA]</scope>
    <source>
        <strain>Z / UTEX 753</strain>
    </source>
</reference>
<reference key="2">
    <citation type="journal article" date="1993" name="Nucleic Acids Res.">
        <title>Complete sequence of Euglena gracilis chloroplast DNA.</title>
        <authorList>
            <person name="Hallick R.B."/>
            <person name="Hong L."/>
            <person name="Drager R.G."/>
            <person name="Favreau M.R."/>
            <person name="Monfort A."/>
            <person name="Orsat B."/>
            <person name="Spielmann A."/>
            <person name="Stutz E."/>
        </authorList>
    </citation>
    <scope>NUCLEOTIDE SEQUENCE [LARGE SCALE GENOMIC DNA]</scope>
    <source>
        <strain>Z / UTEX 753</strain>
    </source>
</reference>
<organism>
    <name type="scientific">Euglena gracilis</name>
    <dbReference type="NCBI Taxonomy" id="3039"/>
    <lineage>
        <taxon>Eukaryota</taxon>
        <taxon>Discoba</taxon>
        <taxon>Euglenozoa</taxon>
        <taxon>Euglenida</taxon>
        <taxon>Spirocuta</taxon>
        <taxon>Euglenophyceae</taxon>
        <taxon>Euglenales</taxon>
        <taxon>Euglenaceae</taxon>
        <taxon>Euglena</taxon>
    </lineage>
</organism>
<geneLocation type="chloroplast"/>
<evidence type="ECO:0000250" key="1"/>
<evidence type="ECO:0000305" key="2"/>
<proteinExistence type="inferred from homology"/>
<keyword id="KW-0150">Chloroplast</keyword>
<keyword id="KW-0934">Plastid</keyword>
<keyword id="KW-0687">Ribonucleoprotein</keyword>
<keyword id="KW-0689">Ribosomal protein</keyword>
<keyword id="KW-0694">RNA-binding</keyword>
<keyword id="KW-0699">rRNA-binding</keyword>